<reference key="1">
    <citation type="journal article" date="2007" name="J. Bacteriol.">
        <title>Genome sequence of Avery's virulent serotype 2 strain D39 of Streptococcus pneumoniae and comparison with that of unencapsulated laboratory strain R6.</title>
        <authorList>
            <person name="Lanie J.A."/>
            <person name="Ng W.-L."/>
            <person name="Kazmierczak K.M."/>
            <person name="Andrzejewski T.M."/>
            <person name="Davidsen T.M."/>
            <person name="Wayne K.J."/>
            <person name="Tettelin H."/>
            <person name="Glass J.I."/>
            <person name="Winkler M.E."/>
        </authorList>
    </citation>
    <scope>NUCLEOTIDE SEQUENCE [LARGE SCALE GENOMIC DNA]</scope>
    <source>
        <strain>D39 / NCTC 7466</strain>
    </source>
</reference>
<dbReference type="EC" id="3.5.4.16" evidence="2"/>
<dbReference type="EMBL" id="CP000410">
    <property type="protein sequence ID" value="ABJ54241.1"/>
    <property type="molecule type" value="Genomic_DNA"/>
</dbReference>
<dbReference type="RefSeq" id="WP_000380915.1">
    <property type="nucleotide sequence ID" value="NZ_JAMLJR010000002.1"/>
</dbReference>
<dbReference type="SMR" id="Q04MF9"/>
<dbReference type="PaxDb" id="373153-SPD_0271"/>
<dbReference type="KEGG" id="spd:SPD_0271"/>
<dbReference type="eggNOG" id="COG0302">
    <property type="taxonomic scope" value="Bacteria"/>
</dbReference>
<dbReference type="HOGENOM" id="CLU_049768_3_3_9"/>
<dbReference type="BioCyc" id="SPNE373153:G1G6V-299-MONOMER"/>
<dbReference type="UniPathway" id="UPA00848">
    <property type="reaction ID" value="UER00151"/>
</dbReference>
<dbReference type="Proteomes" id="UP000001452">
    <property type="component" value="Chromosome"/>
</dbReference>
<dbReference type="GO" id="GO:0005737">
    <property type="term" value="C:cytoplasm"/>
    <property type="evidence" value="ECO:0007669"/>
    <property type="project" value="TreeGrafter"/>
</dbReference>
<dbReference type="GO" id="GO:0005525">
    <property type="term" value="F:GTP binding"/>
    <property type="evidence" value="ECO:0007669"/>
    <property type="project" value="UniProtKB-KW"/>
</dbReference>
<dbReference type="GO" id="GO:0003934">
    <property type="term" value="F:GTP cyclohydrolase I activity"/>
    <property type="evidence" value="ECO:0007669"/>
    <property type="project" value="UniProtKB-UniRule"/>
</dbReference>
<dbReference type="GO" id="GO:0008270">
    <property type="term" value="F:zinc ion binding"/>
    <property type="evidence" value="ECO:0007669"/>
    <property type="project" value="UniProtKB-UniRule"/>
</dbReference>
<dbReference type="GO" id="GO:0006730">
    <property type="term" value="P:one-carbon metabolic process"/>
    <property type="evidence" value="ECO:0007669"/>
    <property type="project" value="UniProtKB-UniRule"/>
</dbReference>
<dbReference type="GO" id="GO:0006729">
    <property type="term" value="P:tetrahydrobiopterin biosynthetic process"/>
    <property type="evidence" value="ECO:0007669"/>
    <property type="project" value="TreeGrafter"/>
</dbReference>
<dbReference type="GO" id="GO:0046654">
    <property type="term" value="P:tetrahydrofolate biosynthetic process"/>
    <property type="evidence" value="ECO:0007669"/>
    <property type="project" value="UniProtKB-UniRule"/>
</dbReference>
<dbReference type="CDD" id="cd00642">
    <property type="entry name" value="GTP_cyclohydro1"/>
    <property type="match status" value="1"/>
</dbReference>
<dbReference type="FunFam" id="1.10.286.10:FF:000001">
    <property type="entry name" value="GTP cyclohydrolase 1"/>
    <property type="match status" value="1"/>
</dbReference>
<dbReference type="FunFam" id="3.30.1130.10:FF:000001">
    <property type="entry name" value="GTP cyclohydrolase 1"/>
    <property type="match status" value="1"/>
</dbReference>
<dbReference type="Gene3D" id="1.10.286.10">
    <property type="match status" value="1"/>
</dbReference>
<dbReference type="Gene3D" id="3.30.1130.10">
    <property type="match status" value="1"/>
</dbReference>
<dbReference type="HAMAP" id="MF_00223">
    <property type="entry name" value="FolE"/>
    <property type="match status" value="1"/>
</dbReference>
<dbReference type="InterPro" id="IPR043133">
    <property type="entry name" value="GTP-CH-I_C/QueF"/>
</dbReference>
<dbReference type="InterPro" id="IPR043134">
    <property type="entry name" value="GTP-CH-I_N"/>
</dbReference>
<dbReference type="InterPro" id="IPR001474">
    <property type="entry name" value="GTP_CycHdrlase_I"/>
</dbReference>
<dbReference type="InterPro" id="IPR018234">
    <property type="entry name" value="GTP_CycHdrlase_I_CS"/>
</dbReference>
<dbReference type="InterPro" id="IPR020602">
    <property type="entry name" value="GTP_CycHdrlase_I_dom"/>
</dbReference>
<dbReference type="NCBIfam" id="TIGR00063">
    <property type="entry name" value="folE"/>
    <property type="match status" value="1"/>
</dbReference>
<dbReference type="NCBIfam" id="NF006825">
    <property type="entry name" value="PRK09347.1-2"/>
    <property type="match status" value="1"/>
</dbReference>
<dbReference type="NCBIfam" id="NF006826">
    <property type="entry name" value="PRK09347.1-3"/>
    <property type="match status" value="1"/>
</dbReference>
<dbReference type="PANTHER" id="PTHR11109:SF7">
    <property type="entry name" value="GTP CYCLOHYDROLASE 1"/>
    <property type="match status" value="1"/>
</dbReference>
<dbReference type="PANTHER" id="PTHR11109">
    <property type="entry name" value="GTP CYCLOHYDROLASE I"/>
    <property type="match status" value="1"/>
</dbReference>
<dbReference type="Pfam" id="PF01227">
    <property type="entry name" value="GTP_cyclohydroI"/>
    <property type="match status" value="1"/>
</dbReference>
<dbReference type="SUPFAM" id="SSF55620">
    <property type="entry name" value="Tetrahydrobiopterin biosynthesis enzymes-like"/>
    <property type="match status" value="1"/>
</dbReference>
<dbReference type="PROSITE" id="PS00859">
    <property type="entry name" value="GTP_CYCLOHYDROL_1_1"/>
    <property type="match status" value="1"/>
</dbReference>
<dbReference type="PROSITE" id="PS00860">
    <property type="entry name" value="GTP_CYCLOHYDROL_1_2"/>
    <property type="match status" value="1"/>
</dbReference>
<protein>
    <recommendedName>
        <fullName evidence="2">GTP cyclohydrolase 1</fullName>
        <ecNumber evidence="2">3.5.4.16</ecNumber>
    </recommendedName>
    <alternativeName>
        <fullName evidence="2">GTP cyclohydrolase I</fullName>
        <shortName evidence="2">GTP-CH-I</shortName>
    </alternativeName>
</protein>
<name>GCH1_STRP2</name>
<keyword id="KW-0342">GTP-binding</keyword>
<keyword id="KW-0378">Hydrolase</keyword>
<keyword id="KW-0479">Metal-binding</keyword>
<keyword id="KW-0547">Nucleotide-binding</keyword>
<keyword id="KW-0554">One-carbon metabolism</keyword>
<keyword id="KW-1185">Reference proteome</keyword>
<keyword id="KW-0862">Zinc</keyword>
<evidence type="ECO:0000250" key="1"/>
<evidence type="ECO:0000255" key="2">
    <source>
        <dbReference type="HAMAP-Rule" id="MF_00223"/>
    </source>
</evidence>
<feature type="chain" id="PRO_1000043745" description="GTP cyclohydrolase 1">
    <location>
        <begin position="1"/>
        <end position="184"/>
    </location>
</feature>
<feature type="binding site" evidence="2">
    <location>
        <position position="75"/>
    </location>
    <ligand>
        <name>Zn(2+)</name>
        <dbReference type="ChEBI" id="CHEBI:29105"/>
    </ligand>
</feature>
<feature type="binding site" evidence="2">
    <location>
        <position position="78"/>
    </location>
    <ligand>
        <name>Zn(2+)</name>
        <dbReference type="ChEBI" id="CHEBI:29105"/>
    </ligand>
</feature>
<feature type="binding site" evidence="2">
    <location>
        <position position="146"/>
    </location>
    <ligand>
        <name>Zn(2+)</name>
        <dbReference type="ChEBI" id="CHEBI:29105"/>
    </ligand>
</feature>
<organism>
    <name type="scientific">Streptococcus pneumoniae serotype 2 (strain D39 / NCTC 7466)</name>
    <dbReference type="NCBI Taxonomy" id="373153"/>
    <lineage>
        <taxon>Bacteria</taxon>
        <taxon>Bacillati</taxon>
        <taxon>Bacillota</taxon>
        <taxon>Bacilli</taxon>
        <taxon>Lactobacillales</taxon>
        <taxon>Streptococcaceae</taxon>
        <taxon>Streptococcus</taxon>
    </lineage>
</organism>
<accession>Q04MF9</accession>
<comment type="catalytic activity">
    <reaction evidence="2">
        <text>GTP + H2O = 7,8-dihydroneopterin 3'-triphosphate + formate + H(+)</text>
        <dbReference type="Rhea" id="RHEA:17473"/>
        <dbReference type="ChEBI" id="CHEBI:15377"/>
        <dbReference type="ChEBI" id="CHEBI:15378"/>
        <dbReference type="ChEBI" id="CHEBI:15740"/>
        <dbReference type="ChEBI" id="CHEBI:37565"/>
        <dbReference type="ChEBI" id="CHEBI:58462"/>
        <dbReference type="EC" id="3.5.4.16"/>
    </reaction>
</comment>
<comment type="pathway">
    <text evidence="2">Cofactor biosynthesis; 7,8-dihydroneopterin triphosphate biosynthesis; 7,8-dihydroneopterin triphosphate from GTP: step 1/1.</text>
</comment>
<comment type="subunit">
    <text evidence="1">Toroid-shaped homodecamer, composed of two pentamers of five dimers.</text>
</comment>
<comment type="similarity">
    <text evidence="2">Belongs to the GTP cyclohydrolase I family.</text>
</comment>
<gene>
    <name evidence="2" type="primary">folE</name>
    <name type="ordered locus">SPD_0271</name>
</gene>
<sequence>MDTQKIEAAVKMIIEAVGEDANREGLQETPARVARMYQEIFSGLGQTAEEHLSKSFEIIDDNMVVEKDIFFHTMCEHHFLPFYGRAHIAYIPDGRVAGLSKLARTVEVYSKKPQIQERLNIEVADALMDYLGAKGAFVIIEAEHMCMSMRGVRKPGTATLTTVARGLFETDKDLRDQAYRLMGL</sequence>
<proteinExistence type="inferred from homology"/>